<feature type="chain" id="PRO_1000080341" description="Large ribosomal subunit protein bL19">
    <location>
        <begin position="1"/>
        <end position="116"/>
    </location>
</feature>
<dbReference type="EMBL" id="CP000909">
    <property type="protein sequence ID" value="ABY34881.1"/>
    <property type="molecule type" value="Genomic_DNA"/>
</dbReference>
<dbReference type="RefSeq" id="WP_012257535.1">
    <property type="nucleotide sequence ID" value="NC_010175.1"/>
</dbReference>
<dbReference type="RefSeq" id="YP_001635270.1">
    <property type="nucleotide sequence ID" value="NC_010175.1"/>
</dbReference>
<dbReference type="SMR" id="A9WBS4"/>
<dbReference type="FunCoup" id="A9WBS4">
    <property type="interactions" value="426"/>
</dbReference>
<dbReference type="STRING" id="324602.Caur_1663"/>
<dbReference type="EnsemblBacteria" id="ABY34881">
    <property type="protein sequence ID" value="ABY34881"/>
    <property type="gene ID" value="Caur_1663"/>
</dbReference>
<dbReference type="KEGG" id="cau:Caur_1663"/>
<dbReference type="PATRIC" id="fig|324602.8.peg.1902"/>
<dbReference type="eggNOG" id="COG0335">
    <property type="taxonomic scope" value="Bacteria"/>
</dbReference>
<dbReference type="HOGENOM" id="CLU_103507_2_1_0"/>
<dbReference type="InParanoid" id="A9WBS4"/>
<dbReference type="Proteomes" id="UP000002008">
    <property type="component" value="Chromosome"/>
</dbReference>
<dbReference type="GO" id="GO:0022625">
    <property type="term" value="C:cytosolic large ribosomal subunit"/>
    <property type="evidence" value="ECO:0000318"/>
    <property type="project" value="GO_Central"/>
</dbReference>
<dbReference type="GO" id="GO:0003735">
    <property type="term" value="F:structural constituent of ribosome"/>
    <property type="evidence" value="ECO:0000318"/>
    <property type="project" value="GO_Central"/>
</dbReference>
<dbReference type="GO" id="GO:0006412">
    <property type="term" value="P:translation"/>
    <property type="evidence" value="ECO:0007669"/>
    <property type="project" value="UniProtKB-UniRule"/>
</dbReference>
<dbReference type="FunFam" id="2.30.30.790:FF:000001">
    <property type="entry name" value="50S ribosomal protein L19"/>
    <property type="match status" value="1"/>
</dbReference>
<dbReference type="Gene3D" id="2.30.30.790">
    <property type="match status" value="1"/>
</dbReference>
<dbReference type="HAMAP" id="MF_00402">
    <property type="entry name" value="Ribosomal_bL19"/>
    <property type="match status" value="1"/>
</dbReference>
<dbReference type="InterPro" id="IPR001857">
    <property type="entry name" value="Ribosomal_bL19"/>
</dbReference>
<dbReference type="InterPro" id="IPR018257">
    <property type="entry name" value="Ribosomal_bL19_CS"/>
</dbReference>
<dbReference type="InterPro" id="IPR038657">
    <property type="entry name" value="Ribosomal_bL19_sf"/>
</dbReference>
<dbReference type="InterPro" id="IPR008991">
    <property type="entry name" value="Translation_prot_SH3-like_sf"/>
</dbReference>
<dbReference type="NCBIfam" id="TIGR01024">
    <property type="entry name" value="rplS_bact"/>
    <property type="match status" value="1"/>
</dbReference>
<dbReference type="PANTHER" id="PTHR15680:SF9">
    <property type="entry name" value="LARGE RIBOSOMAL SUBUNIT PROTEIN BL19M"/>
    <property type="match status" value="1"/>
</dbReference>
<dbReference type="PANTHER" id="PTHR15680">
    <property type="entry name" value="RIBOSOMAL PROTEIN L19"/>
    <property type="match status" value="1"/>
</dbReference>
<dbReference type="Pfam" id="PF01245">
    <property type="entry name" value="Ribosomal_L19"/>
    <property type="match status" value="1"/>
</dbReference>
<dbReference type="PIRSF" id="PIRSF002191">
    <property type="entry name" value="Ribosomal_L19"/>
    <property type="match status" value="1"/>
</dbReference>
<dbReference type="PRINTS" id="PR00061">
    <property type="entry name" value="RIBOSOMALL19"/>
</dbReference>
<dbReference type="SUPFAM" id="SSF50104">
    <property type="entry name" value="Translation proteins SH3-like domain"/>
    <property type="match status" value="1"/>
</dbReference>
<dbReference type="PROSITE" id="PS01015">
    <property type="entry name" value="RIBOSOMAL_L19"/>
    <property type="match status" value="1"/>
</dbReference>
<protein>
    <recommendedName>
        <fullName evidence="1">Large ribosomal subunit protein bL19</fullName>
    </recommendedName>
    <alternativeName>
        <fullName evidence="2">50S ribosomal protein L19</fullName>
    </alternativeName>
</protein>
<comment type="function">
    <text evidence="1">This protein is located at the 30S-50S ribosomal subunit interface and may play a role in the structure and function of the aminoacyl-tRNA binding site.</text>
</comment>
<comment type="similarity">
    <text evidence="1">Belongs to the bacterial ribosomal protein bL19 family.</text>
</comment>
<reference key="1">
    <citation type="journal article" date="2011" name="BMC Genomics">
        <title>Complete genome sequence of the filamentous anoxygenic phototrophic bacterium Chloroflexus aurantiacus.</title>
        <authorList>
            <person name="Tang K.H."/>
            <person name="Barry K."/>
            <person name="Chertkov O."/>
            <person name="Dalin E."/>
            <person name="Han C.S."/>
            <person name="Hauser L.J."/>
            <person name="Honchak B.M."/>
            <person name="Karbach L.E."/>
            <person name="Land M.L."/>
            <person name="Lapidus A."/>
            <person name="Larimer F.W."/>
            <person name="Mikhailova N."/>
            <person name="Pitluck S."/>
            <person name="Pierson B.K."/>
            <person name="Blankenship R.E."/>
        </authorList>
    </citation>
    <scope>NUCLEOTIDE SEQUENCE [LARGE SCALE GENOMIC DNA]</scope>
    <source>
        <strain>ATCC 29366 / DSM 635 / J-10-fl</strain>
    </source>
</reference>
<sequence>MSQQLLEELGRRQYRTDIPEFRVGDTVRVGVKVVEGNRERVQDFEGVVIRRRGEGINENFTVRRIASHGIGVERTFLLHAPRIDSIKVIRQGKVRRAKLYYLRGRAGKAARIRERR</sequence>
<organism>
    <name type="scientific">Chloroflexus aurantiacus (strain ATCC 29366 / DSM 635 / J-10-fl)</name>
    <dbReference type="NCBI Taxonomy" id="324602"/>
    <lineage>
        <taxon>Bacteria</taxon>
        <taxon>Bacillati</taxon>
        <taxon>Chloroflexota</taxon>
        <taxon>Chloroflexia</taxon>
        <taxon>Chloroflexales</taxon>
        <taxon>Chloroflexineae</taxon>
        <taxon>Chloroflexaceae</taxon>
        <taxon>Chloroflexus</taxon>
    </lineage>
</organism>
<evidence type="ECO:0000255" key="1">
    <source>
        <dbReference type="HAMAP-Rule" id="MF_00402"/>
    </source>
</evidence>
<evidence type="ECO:0000305" key="2"/>
<name>RL19_CHLAA</name>
<keyword id="KW-1185">Reference proteome</keyword>
<keyword id="KW-0687">Ribonucleoprotein</keyword>
<keyword id="KW-0689">Ribosomal protein</keyword>
<gene>
    <name evidence="1" type="primary">rplS</name>
    <name type="ordered locus">Caur_1663</name>
</gene>
<accession>A9WBS4</accession>
<proteinExistence type="inferred from homology"/>